<sequence>MSPAMANPRVRKFNPIAFTPLPVTLITTIVYLAVLILVLVTYLVVPPAPTLEMSPRGVNLTEAWRDLQHLTGGFHPYNSRRNDDVHAWLLHRIEAIVREHSAAADDVPEVFVFDDNLSNLTYSNGGVSKSPIVGVYFESTNIIVYIRGSEDDPQNWWEWSNGKPKGKGGVLVNAHYDSVSTGYGATDDGMGVVSLLQLLRYFTIAGNKPRKGLVLLFNNGEEDYLNGARVYSQHAMSNFTHTFLNLEGAGAGGRACLFRTTDTEVTRFYKNAKHPFGSVLAGDGFKLGLIRSQTDYVVFNGVLGLRGLDVSFIAPRSRYHTDQDDARHTNVDSLWHMLSVAIATTEGLVSYTGTDFDSKTTDQDKVNSGDGTLGVWFDIFGSAFAVFRLHTLFALSVTLLVSAPLVLFITSIALSKTDRMYLFSMSKSLGGTSETVSLRGLRGLFRTPIILTVTTVITIGLAYLLEKINPYIVHSSQFAVWSMMLSVWIFVAWFLARVADFFRPSALHRAYSYTWIFIATWIMLVISTVYANQKGIAAGYFIFFYFAAVFLATWVSYLELFSLPRKGYYAHQTSRGQRRRSSSLSSRLLTPSADELPSDIGPNGAENLGDPDETDPTESTSLLRGQRTTFANYRTGGNSGVTEYTAEGEHVREAGIFGHEQSWSWTLPRWTWILQLLLLAPIVIILVGQVGLLLTTAMSQIGSDGVSTFIVYLACALLSTLLFAPLFPFIHRFTYHVPTFLLLIFIGTLIYNLVAFPFSPANRLKIFFIQEVNLDDGTNKVSLTGIQPYLTNTINAIPSAAGQTANCTQGPFGSLVRCSWSGPPPRVVKEDPGNDQTMGPYTWISYNITKTVGKNEARIKVSGRNTRACKLKFDNPVADYRISGSAVDHRLPHTSRQGVAEIRLWSRTWENTWVVDVDWHSNPVKPGESKDGDEKQDVSKNELSGKVICLWSDNNESGVIPALDEVRLYAPAWVAISKSADGLVEASHDFIIQ</sequence>
<reference key="1">
    <citation type="journal article" date="2011" name="PLoS Genet.">
        <title>Comparative genomic analysis of human fungal pathogens causing paracoccidioidomycosis.</title>
        <authorList>
            <person name="Desjardins C.A."/>
            <person name="Champion M.D."/>
            <person name="Holder J.W."/>
            <person name="Muszewska A."/>
            <person name="Goldberg J."/>
            <person name="Bailao A.M."/>
            <person name="Brigido M.M."/>
            <person name="Ferreira M.E."/>
            <person name="Garcia A.M."/>
            <person name="Grynberg M."/>
            <person name="Gujja S."/>
            <person name="Heiman D.I."/>
            <person name="Henn M.R."/>
            <person name="Kodira C.D."/>
            <person name="Leon-Narvaez H."/>
            <person name="Longo L.V.G."/>
            <person name="Ma L.-J."/>
            <person name="Malavazi I."/>
            <person name="Matsuo A.L."/>
            <person name="Morais F.V."/>
            <person name="Pereira M."/>
            <person name="Rodriguez-Brito S."/>
            <person name="Sakthikumar S."/>
            <person name="Salem-Izacc S.M."/>
            <person name="Sykes S.M."/>
            <person name="Teixeira M.M."/>
            <person name="Vallejo M.C."/>
            <person name="Walter M.E."/>
            <person name="Yandava C."/>
            <person name="Young S."/>
            <person name="Zeng Q."/>
            <person name="Zucker J."/>
            <person name="Felipe M.S."/>
            <person name="Goldman G.H."/>
            <person name="Haas B.J."/>
            <person name="McEwen J.G."/>
            <person name="Nino-Vega G."/>
            <person name="Puccia R."/>
            <person name="San-Blas G."/>
            <person name="Soares C.M."/>
            <person name="Birren B.W."/>
            <person name="Cuomo C.A."/>
        </authorList>
    </citation>
    <scope>NUCLEOTIDE SEQUENCE [LARGE SCALE GENOMIC DNA]</scope>
    <source>
        <strain>ATCC MYA-826 / Pb01</strain>
    </source>
</reference>
<name>PFF1_PARBA</name>
<evidence type="ECO:0000250" key="1">
    <source>
        <dbReference type="UniProtKB" id="P38244"/>
    </source>
</evidence>
<evidence type="ECO:0000250" key="2">
    <source>
        <dbReference type="UniProtKB" id="P80561"/>
    </source>
</evidence>
<evidence type="ECO:0000255" key="3"/>
<evidence type="ECO:0000255" key="4">
    <source>
        <dbReference type="PROSITE-ProRule" id="PRU00498"/>
    </source>
</evidence>
<evidence type="ECO:0000256" key="5">
    <source>
        <dbReference type="SAM" id="MobiDB-lite"/>
    </source>
</evidence>
<evidence type="ECO:0000305" key="6"/>
<gene>
    <name type="ORF">PAAG_01828</name>
</gene>
<feature type="chain" id="PRO_0000411728" description="Vacuolar membrane protease">
    <location>
        <begin position="1"/>
        <end position="993"/>
    </location>
</feature>
<feature type="topological domain" description="Cytoplasmic" evidence="1">
    <location>
        <begin position="1"/>
        <end position="24"/>
    </location>
</feature>
<feature type="transmembrane region" description="Helical; Name=1" evidence="3">
    <location>
        <begin position="25"/>
        <end position="45"/>
    </location>
</feature>
<feature type="topological domain" description="Vacuolar" evidence="1">
    <location>
        <begin position="46"/>
        <end position="391"/>
    </location>
</feature>
<feature type="transmembrane region" description="Helical; Name=2" evidence="3">
    <location>
        <begin position="392"/>
        <end position="412"/>
    </location>
</feature>
<feature type="topological domain" description="Cytoplasmic" evidence="1">
    <location>
        <begin position="413"/>
        <end position="447"/>
    </location>
</feature>
<feature type="transmembrane region" description="Helical; Name=3" evidence="3">
    <location>
        <begin position="448"/>
        <end position="468"/>
    </location>
</feature>
<feature type="topological domain" description="Vacuolar" evidence="1">
    <location>
        <begin position="469"/>
        <end position="475"/>
    </location>
</feature>
<feature type="transmembrane region" description="Helical; Name=4" evidence="3">
    <location>
        <begin position="476"/>
        <end position="496"/>
    </location>
</feature>
<feature type="topological domain" description="Cytoplasmic" evidence="1">
    <location>
        <begin position="497"/>
        <end position="509"/>
    </location>
</feature>
<feature type="transmembrane region" description="Helical; Name=5" evidence="3">
    <location>
        <begin position="510"/>
        <end position="530"/>
    </location>
</feature>
<feature type="topological domain" description="Vacuolar" evidence="1">
    <location>
        <begin position="531"/>
        <end position="534"/>
    </location>
</feature>
<feature type="transmembrane region" description="Helical; Name=6" evidence="3">
    <location>
        <begin position="535"/>
        <end position="555"/>
    </location>
</feature>
<feature type="topological domain" description="Cytoplasmic" evidence="1">
    <location>
        <begin position="556"/>
        <end position="672"/>
    </location>
</feature>
<feature type="transmembrane region" description="Helical; Name=7" evidence="3">
    <location>
        <begin position="673"/>
        <end position="693"/>
    </location>
</feature>
<feature type="topological domain" description="Vacuolar" evidence="1">
    <location>
        <begin position="694"/>
        <end position="709"/>
    </location>
</feature>
<feature type="transmembrane region" description="Helical; Name=8" evidence="3">
    <location>
        <begin position="710"/>
        <end position="730"/>
    </location>
</feature>
<feature type="topological domain" description="Cytoplasmic" evidence="1">
    <location>
        <begin position="731"/>
        <end position="737"/>
    </location>
</feature>
<feature type="transmembrane region" description="Helical; Name=9" evidence="3">
    <location>
        <begin position="738"/>
        <end position="758"/>
    </location>
</feature>
<feature type="topological domain" description="Vacuolar" evidence="1">
    <location>
        <begin position="759"/>
        <end position="993"/>
    </location>
</feature>
<feature type="region of interest" description="Disordered" evidence="5">
    <location>
        <begin position="579"/>
        <end position="621"/>
    </location>
</feature>
<feature type="active site" description="Proton acceptor" evidence="2">
    <location>
        <position position="221"/>
    </location>
</feature>
<feature type="binding site" evidence="2">
    <location>
        <position position="175"/>
    </location>
    <ligand>
        <name>Zn(2+)</name>
        <dbReference type="ChEBI" id="CHEBI:29105"/>
        <label>1</label>
        <note>catalytic</note>
    </ligand>
</feature>
<feature type="binding site" evidence="2">
    <location>
        <position position="187"/>
    </location>
    <ligand>
        <name>Zn(2+)</name>
        <dbReference type="ChEBI" id="CHEBI:29105"/>
        <label>1</label>
        <note>catalytic</note>
    </ligand>
</feature>
<feature type="binding site" evidence="2">
    <location>
        <position position="187"/>
    </location>
    <ligand>
        <name>Zn(2+)</name>
        <dbReference type="ChEBI" id="CHEBI:29105"/>
        <label>2</label>
        <note>catalytic</note>
    </ligand>
</feature>
<feature type="binding site" evidence="2">
    <location>
        <position position="222"/>
    </location>
    <ligand>
        <name>Zn(2+)</name>
        <dbReference type="ChEBI" id="CHEBI:29105"/>
        <label>2</label>
        <note>catalytic</note>
    </ligand>
</feature>
<feature type="binding site" evidence="2">
    <location>
        <position position="247"/>
    </location>
    <ligand>
        <name>Zn(2+)</name>
        <dbReference type="ChEBI" id="CHEBI:29105"/>
        <label>1</label>
        <note>catalytic</note>
    </ligand>
</feature>
<feature type="binding site" evidence="2">
    <location>
        <position position="320"/>
    </location>
    <ligand>
        <name>Zn(2+)</name>
        <dbReference type="ChEBI" id="CHEBI:29105"/>
        <label>2</label>
        <note>catalytic</note>
    </ligand>
</feature>
<feature type="site" description="Transition state stabilizer" evidence="2">
    <location>
        <position position="319"/>
    </location>
</feature>
<feature type="glycosylation site" description="N-linked (GlcNAc...) asparagine" evidence="4">
    <location>
        <position position="59"/>
    </location>
</feature>
<feature type="glycosylation site" description="N-linked (GlcNAc...) asparagine" evidence="4">
    <location>
        <position position="116"/>
    </location>
</feature>
<feature type="glycosylation site" description="N-linked (GlcNAc...) asparagine" evidence="4">
    <location>
        <position position="119"/>
    </location>
</feature>
<feature type="glycosylation site" description="N-linked (GlcNAc...) asparagine" evidence="4">
    <location>
        <position position="238"/>
    </location>
</feature>
<feature type="glycosylation site" description="N-linked (GlcNAc...) asparagine" evidence="4">
    <location>
        <position position="806"/>
    </location>
</feature>
<feature type="glycosylation site" description="N-linked (GlcNAc...) asparagine" evidence="4">
    <location>
        <position position="847"/>
    </location>
</feature>
<feature type="glycosylation site" description="N-linked (GlcNAc...) asparagine" evidence="4">
    <location>
        <position position="955"/>
    </location>
</feature>
<organism>
    <name type="scientific">Paracoccidioides lutzii (strain ATCC MYA-826 / Pb01)</name>
    <name type="common">Paracoccidioides brasiliensis</name>
    <dbReference type="NCBI Taxonomy" id="502779"/>
    <lineage>
        <taxon>Eukaryota</taxon>
        <taxon>Fungi</taxon>
        <taxon>Dikarya</taxon>
        <taxon>Ascomycota</taxon>
        <taxon>Pezizomycotina</taxon>
        <taxon>Eurotiomycetes</taxon>
        <taxon>Eurotiomycetidae</taxon>
        <taxon>Onygenales</taxon>
        <taxon>Ajellomycetaceae</taxon>
        <taxon>Paracoccidioides</taxon>
    </lineage>
</organism>
<accession>C1GTI3</accession>
<protein>
    <recommendedName>
        <fullName evidence="1">Vacuolar membrane protease</fullName>
        <ecNumber evidence="6">3.4.-.-</ecNumber>
    </recommendedName>
    <alternativeName>
        <fullName evidence="1">FXNA-related family protease 1</fullName>
    </alternativeName>
</protein>
<proteinExistence type="inferred from homology"/>
<dbReference type="EC" id="3.4.-.-" evidence="6"/>
<dbReference type="EMBL" id="KN293995">
    <property type="protein sequence ID" value="EEH39639.1"/>
    <property type="molecule type" value="Genomic_DNA"/>
</dbReference>
<dbReference type="RefSeq" id="XP_002795940.1">
    <property type="nucleotide sequence ID" value="XM_002795894.1"/>
</dbReference>
<dbReference type="SMR" id="C1GTI3"/>
<dbReference type="STRING" id="502779.C1GTI3"/>
<dbReference type="GeneID" id="9099321"/>
<dbReference type="KEGG" id="pbl:PAAG_01828"/>
<dbReference type="VEuPathDB" id="FungiDB:PAAG_01828"/>
<dbReference type="eggNOG" id="KOG2194">
    <property type="taxonomic scope" value="Eukaryota"/>
</dbReference>
<dbReference type="HOGENOM" id="CLU_006412_1_0_1"/>
<dbReference type="OMA" id="TPWPVTI"/>
<dbReference type="OrthoDB" id="10257471at2759"/>
<dbReference type="Proteomes" id="UP000002059">
    <property type="component" value="Partially assembled WGS sequence"/>
</dbReference>
<dbReference type="GO" id="GO:0005774">
    <property type="term" value="C:vacuolar membrane"/>
    <property type="evidence" value="ECO:0007669"/>
    <property type="project" value="UniProtKB-SubCell"/>
</dbReference>
<dbReference type="GO" id="GO:0046872">
    <property type="term" value="F:metal ion binding"/>
    <property type="evidence" value="ECO:0007669"/>
    <property type="project" value="UniProtKB-KW"/>
</dbReference>
<dbReference type="GO" id="GO:0008235">
    <property type="term" value="F:metalloexopeptidase activity"/>
    <property type="evidence" value="ECO:0007669"/>
    <property type="project" value="InterPro"/>
</dbReference>
<dbReference type="GO" id="GO:0006508">
    <property type="term" value="P:proteolysis"/>
    <property type="evidence" value="ECO:0007669"/>
    <property type="project" value="UniProtKB-KW"/>
</dbReference>
<dbReference type="CDD" id="cd03875">
    <property type="entry name" value="M28_Fxna_like"/>
    <property type="match status" value="1"/>
</dbReference>
<dbReference type="FunFam" id="3.40.630.10:FF:000057">
    <property type="entry name" value="Vacuolar membrane protease"/>
    <property type="match status" value="1"/>
</dbReference>
<dbReference type="Gene3D" id="3.40.630.10">
    <property type="entry name" value="Zn peptidases"/>
    <property type="match status" value="1"/>
</dbReference>
<dbReference type="InterPro" id="IPR048024">
    <property type="entry name" value="Fxna-like_M28_dom"/>
</dbReference>
<dbReference type="InterPro" id="IPR045175">
    <property type="entry name" value="M28_fam"/>
</dbReference>
<dbReference type="InterPro" id="IPR007484">
    <property type="entry name" value="Peptidase_M28"/>
</dbReference>
<dbReference type="InterPro" id="IPR053975">
    <property type="entry name" value="PFF1_C"/>
</dbReference>
<dbReference type="InterPro" id="IPR053976">
    <property type="entry name" value="PFF1_TM"/>
</dbReference>
<dbReference type="PANTHER" id="PTHR12147">
    <property type="entry name" value="METALLOPEPTIDASE M28 FAMILY MEMBER"/>
    <property type="match status" value="1"/>
</dbReference>
<dbReference type="PANTHER" id="PTHR12147:SF58">
    <property type="entry name" value="VACUOLAR MEMBRANE PROTEASE"/>
    <property type="match status" value="1"/>
</dbReference>
<dbReference type="Pfam" id="PF04389">
    <property type="entry name" value="Peptidase_M28"/>
    <property type="match status" value="1"/>
</dbReference>
<dbReference type="Pfam" id="PF22250">
    <property type="entry name" value="PFF1_C"/>
    <property type="match status" value="1"/>
</dbReference>
<dbReference type="Pfam" id="PF22251">
    <property type="entry name" value="PFF1_TM"/>
    <property type="match status" value="1"/>
</dbReference>
<dbReference type="SUPFAM" id="SSF53187">
    <property type="entry name" value="Zn-dependent exopeptidases"/>
    <property type="match status" value="1"/>
</dbReference>
<keyword id="KW-0325">Glycoprotein</keyword>
<keyword id="KW-0378">Hydrolase</keyword>
<keyword id="KW-0472">Membrane</keyword>
<keyword id="KW-0479">Metal-binding</keyword>
<keyword id="KW-0482">Metalloprotease</keyword>
<keyword id="KW-0645">Protease</keyword>
<keyword id="KW-1185">Reference proteome</keyword>
<keyword id="KW-0812">Transmembrane</keyword>
<keyword id="KW-1133">Transmembrane helix</keyword>
<keyword id="KW-0926">Vacuole</keyword>
<keyword id="KW-0862">Zinc</keyword>
<comment type="function">
    <text evidence="1">May be involved in vacuolar sorting and osmoregulation.</text>
</comment>
<comment type="cofactor">
    <cofactor evidence="2">
        <name>Zn(2+)</name>
        <dbReference type="ChEBI" id="CHEBI:29105"/>
    </cofactor>
    <text evidence="2">Binds 2 Zn(2+) ions per subunit.</text>
</comment>
<comment type="subcellular location">
    <subcellularLocation>
        <location evidence="1">Vacuole membrane</location>
        <topology evidence="3">Multi-pass membrane protein</topology>
    </subcellularLocation>
</comment>
<comment type="similarity">
    <text evidence="6">Belongs to the peptidase M28 family.</text>
</comment>